<organism>
    <name type="scientific">Simian foamy virus type 3 (strain LK3)</name>
    <name type="common">SFVagm</name>
    <name type="synonym">SFV-3</name>
    <dbReference type="NCBI Taxonomy" id="11644"/>
    <lineage>
        <taxon>Viruses</taxon>
        <taxon>Riboviria</taxon>
        <taxon>Pararnavirae</taxon>
        <taxon>Artverviricota</taxon>
        <taxon>Revtraviricetes</taxon>
        <taxon>Ortervirales</taxon>
        <taxon>Retroviridae</taxon>
        <taxon>Spumaretrovirinae</taxon>
        <taxon>Spumavirus</taxon>
        <taxon>African green monkey simian foamy virus</taxon>
    </lineage>
</organism>
<protein>
    <recommendedName>
        <fullName>Protein Bel-2</fullName>
    </recommendedName>
</protein>
<organismHost>
    <name type="scientific">Chlorocebus aethiops</name>
    <name type="common">Green monkey</name>
    <name type="synonym">Cercopithecus aethiops</name>
    <dbReference type="NCBI Taxonomy" id="9534"/>
</organismHost>
<organismHost>
    <name type="scientific">Homo sapiens</name>
    <name type="common">Human</name>
    <dbReference type="NCBI Taxonomy" id="9606"/>
</organismHost>
<keyword id="KW-1185">Reference proteome</keyword>
<dbReference type="EMBL" id="M74895">
    <property type="protein sequence ID" value="AAA47800.1"/>
    <property type="molecule type" value="Genomic_DNA"/>
</dbReference>
<dbReference type="EMBL" id="M74895">
    <property type="protein sequence ID" value="AAA47797.1"/>
    <property type="status" value="ALT_INIT"/>
    <property type="molecule type" value="Genomic_DNA"/>
</dbReference>
<dbReference type="PIR" id="E40820">
    <property type="entry name" value="WMLJBT"/>
</dbReference>
<dbReference type="KEGG" id="vg:6386655"/>
<dbReference type="Proteomes" id="UP000007217">
    <property type="component" value="Segment"/>
</dbReference>
<dbReference type="GO" id="GO:0045893">
    <property type="term" value="P:positive regulation of DNA-templated transcription"/>
    <property type="evidence" value="ECO:0007669"/>
    <property type="project" value="InterPro"/>
</dbReference>
<dbReference type="GO" id="GO:0016032">
    <property type="term" value="P:viral process"/>
    <property type="evidence" value="ECO:0007669"/>
    <property type="project" value="InterPro"/>
</dbReference>
<dbReference type="InterPro" id="IPR004956">
    <property type="entry name" value="Foamy_BEL"/>
</dbReference>
<dbReference type="Pfam" id="PF03274">
    <property type="entry name" value="Foamy_BEL"/>
    <property type="match status" value="1"/>
</dbReference>
<gene>
    <name type="primary">bel2</name>
</gene>
<evidence type="ECO:0000305" key="1"/>
<comment type="miscellaneous">
    <text>Bel-2 expression is low.</text>
</comment>
<comment type="similarity">
    <text evidence="1">Belongs to the spumavirus protein Bel-2 family.</text>
</comment>
<comment type="sequence caution" evidence="1">
    <conflict type="erroneous initiation">
        <sequence resource="EMBL-CDS" id="AAA47797"/>
    </conflict>
</comment>
<proteinExistence type="inferred from homology"/>
<accession>P27403</accession>
<accession>Q88191</accession>
<reference key="1">
    <citation type="journal article" date="1992" name="Virology">
        <title>Genomic organization and expression of simian foamy virus type 3 (SFV-3).</title>
        <authorList>
            <person name="Renne R."/>
            <person name="Friedl E."/>
            <person name="Schweizer M."/>
            <person name="Fleps U."/>
            <person name="Turek R."/>
            <person name="Neumann-Haefelin D."/>
        </authorList>
    </citation>
    <scope>NUCLEOTIDE SEQUENCE [GENOMIC DNA]</scope>
</reference>
<feature type="chain" id="PRO_0000125514" description="Protein Bel-2">
    <location>
        <begin position="1"/>
        <end position="388"/>
    </location>
</feature>
<name>BEL2_SFV3L</name>
<sequence>MRDVCLPFLARENLSNPESGLILLEDTERSHSSLRIGQNAPDGVWPLGNSPILPVVTPWPLCQDHAAPSIWTLLDAYWRGYQDQNLEPPKWLWLCLEDPSGNKYTGTQFLVPPLGLVKIRLYQNLTVVYICQSIDPWENENPTGGRRDPTRRYGCRIACDPVYCVKIVWEGNLWDKKDQPCWLIRLKEGHNHGAKELSQRDIKILGESRPYPYGLIGQCPKLQYAIQVKMRVDKAPLTAKVLAVKALHFHRWNICQRENPGIGEGYFPSGYTQALKAYGPQHGSAEQRVWLISTKIVGPQEKDYWRDAYRWGYFPLVPNKHHPGWTRHLTKFKISRFATPADIQKIVDELLPRGASIVTADGNRYESTRKVHLVNEGTLEEYQAKIRK</sequence>